<keyword id="KW-0030">Aminoacyl-tRNA synthetase</keyword>
<keyword id="KW-0067">ATP-binding</keyword>
<keyword id="KW-0963">Cytoplasm</keyword>
<keyword id="KW-0436">Ligase</keyword>
<keyword id="KW-0479">Metal-binding</keyword>
<keyword id="KW-0547">Nucleotide-binding</keyword>
<keyword id="KW-0648">Protein biosynthesis</keyword>
<keyword id="KW-0694">RNA-binding</keyword>
<keyword id="KW-0820">tRNA-binding</keyword>
<keyword id="KW-0862">Zinc</keyword>
<protein>
    <recommendedName>
        <fullName evidence="1">Alanine--tRNA ligase</fullName>
        <ecNumber evidence="1">6.1.1.7</ecNumber>
    </recommendedName>
    <alternativeName>
        <fullName evidence="1">Alanyl-tRNA synthetase</fullName>
        <shortName evidence="1">AlaRS</shortName>
    </alternativeName>
</protein>
<comment type="function">
    <text evidence="1">Catalyzes the attachment of alanine to tRNA(Ala) in a two-step reaction: alanine is first activated by ATP to form Ala-AMP and then transferred to the acceptor end of tRNA(Ala). Also edits incorrectly charged Ser-tRNA(Ala) and Gly-tRNA(Ala) via its editing domain.</text>
</comment>
<comment type="catalytic activity">
    <reaction evidence="1">
        <text>tRNA(Ala) + L-alanine + ATP = L-alanyl-tRNA(Ala) + AMP + diphosphate</text>
        <dbReference type="Rhea" id="RHEA:12540"/>
        <dbReference type="Rhea" id="RHEA-COMP:9657"/>
        <dbReference type="Rhea" id="RHEA-COMP:9923"/>
        <dbReference type="ChEBI" id="CHEBI:30616"/>
        <dbReference type="ChEBI" id="CHEBI:33019"/>
        <dbReference type="ChEBI" id="CHEBI:57972"/>
        <dbReference type="ChEBI" id="CHEBI:78442"/>
        <dbReference type="ChEBI" id="CHEBI:78497"/>
        <dbReference type="ChEBI" id="CHEBI:456215"/>
        <dbReference type="EC" id="6.1.1.7"/>
    </reaction>
</comment>
<comment type="cofactor">
    <cofactor evidence="1">
        <name>Zn(2+)</name>
        <dbReference type="ChEBI" id="CHEBI:29105"/>
    </cofactor>
    <text evidence="1">Binds 1 zinc ion per subunit.</text>
</comment>
<comment type="subcellular location">
    <subcellularLocation>
        <location evidence="1">Cytoplasm</location>
    </subcellularLocation>
</comment>
<comment type="domain">
    <text evidence="1">Consists of three domains; the N-terminal catalytic domain, the editing domain and the C-terminal C-Ala domain. The editing domain removes incorrectly charged amino acids, while the C-Ala domain, along with tRNA(Ala), serves as a bridge to cooperatively bring together the editing and aminoacylation centers thus stimulating deacylation of misacylated tRNAs.</text>
</comment>
<comment type="similarity">
    <text evidence="1">Belongs to the class-II aminoacyl-tRNA synthetase family.</text>
</comment>
<sequence>MKSQTKNTPITGDEIRKEFLNFYHEKLHKIIPSASLIPDDPTVMLTIAGMLPFKPVFLGLKERPSKRATSSQKCIRTNDIENVGVTARHHTFFEMLGNFSFGDYFKKEAIEWAWELVTDIYGLSAENIIVSVFHEDDDSVKIWKEDIGIHPKRIIKLGEKDNFWSSGKTGPCGPCSELYFDFKPEKGVQNIDLEDGDRFIEFYNLVFMQYNRDPDGQLTDLKYKNIDTGMGLERMAQILQKKKNNYETDLIFPIIQKASEISKIDYYSSGERTKISLKIIGDHIRAVIHLISDGVIASNLGRGYILRRLIRRMVRHGRLLGLKNEFLSKLASVGIKLMQENYPDLKNNCDHILSEIKIEEIRFRETLERGEKLLDELISSGQKMITGFKAFELYDTYGFPLELTEEIAQENNIGVDVKGFDKEMSAQKERAKAASQIIDLTLEGSLEREIDLFDKTLFNGYDSLDSDAEIKGIFLESTLVKQASEGQKVLIVLDQTSFYGESGGQVGDIGTILSNDLEVVVDNVIRKKNVFLHYGIVKKGILSLGQKVKTKVNDLARAKAAANHTATHLLQSALKVVVNESVGQKGSLVAFNKLRFDFNSSKPITKDQIFKVETLVNSWILENHSLNIKNMAKSEALERGAVAMFGEKYDDEVRVVDVPSVSMELCGGTHVKTTSELGCFKIISEEGISAGVRRIEALSGQSAFEYFSDKNSLVSQLCDLLKANPNQLLDRVNSLQSELINKNKEIQKMKDEIAYFKYSSLSSSANKVGLFSLIISQLDGLDGNSLQSAALDLTSKLGDKSVVILGGIPDKENRKLLFVVSFGEDLVKRGMHAGKLINDISRICSGGGGGKPNFAQAGAKDIDKLNDALEYARKDLRTKLHSYSDK</sequence>
<gene>
    <name evidence="1" type="primary">alaS</name>
    <name type="ordered locus">PMM0044</name>
</gene>
<evidence type="ECO:0000255" key="1">
    <source>
        <dbReference type="HAMAP-Rule" id="MF_00036"/>
    </source>
</evidence>
<feature type="chain" id="PRO_0000075174" description="Alanine--tRNA ligase">
    <location>
        <begin position="1"/>
        <end position="886"/>
    </location>
</feature>
<feature type="binding site" evidence="1">
    <location>
        <position position="564"/>
    </location>
    <ligand>
        <name>Zn(2+)</name>
        <dbReference type="ChEBI" id="CHEBI:29105"/>
    </ligand>
</feature>
<feature type="binding site" evidence="1">
    <location>
        <position position="568"/>
    </location>
    <ligand>
        <name>Zn(2+)</name>
        <dbReference type="ChEBI" id="CHEBI:29105"/>
    </ligand>
</feature>
<feature type="binding site" evidence="1">
    <location>
        <position position="666"/>
    </location>
    <ligand>
        <name>Zn(2+)</name>
        <dbReference type="ChEBI" id="CHEBI:29105"/>
    </ligand>
</feature>
<feature type="binding site" evidence="1">
    <location>
        <position position="670"/>
    </location>
    <ligand>
        <name>Zn(2+)</name>
        <dbReference type="ChEBI" id="CHEBI:29105"/>
    </ligand>
</feature>
<reference key="1">
    <citation type="journal article" date="2003" name="Nature">
        <title>Genome divergence in two Prochlorococcus ecotypes reflects oceanic niche differentiation.</title>
        <authorList>
            <person name="Rocap G."/>
            <person name="Larimer F.W."/>
            <person name="Lamerdin J.E."/>
            <person name="Malfatti S."/>
            <person name="Chain P."/>
            <person name="Ahlgren N.A."/>
            <person name="Arellano A."/>
            <person name="Coleman M."/>
            <person name="Hauser L."/>
            <person name="Hess W.R."/>
            <person name="Johnson Z.I."/>
            <person name="Land M.L."/>
            <person name="Lindell D."/>
            <person name="Post A.F."/>
            <person name="Regala W."/>
            <person name="Shah M."/>
            <person name="Shaw S.L."/>
            <person name="Steglich C."/>
            <person name="Sullivan M.B."/>
            <person name="Ting C.S."/>
            <person name="Tolonen A."/>
            <person name="Webb E.A."/>
            <person name="Zinser E.R."/>
            <person name="Chisholm S.W."/>
        </authorList>
    </citation>
    <scope>NUCLEOTIDE SEQUENCE [LARGE SCALE GENOMIC DNA]</scope>
    <source>
        <strain>CCMP1986 / NIES-2087 / MED4</strain>
    </source>
</reference>
<accession>Q7V3N0</accession>
<organism>
    <name type="scientific">Prochlorococcus marinus subsp. pastoris (strain CCMP1986 / NIES-2087 / MED4)</name>
    <dbReference type="NCBI Taxonomy" id="59919"/>
    <lineage>
        <taxon>Bacteria</taxon>
        <taxon>Bacillati</taxon>
        <taxon>Cyanobacteriota</taxon>
        <taxon>Cyanophyceae</taxon>
        <taxon>Synechococcales</taxon>
        <taxon>Prochlorococcaceae</taxon>
        <taxon>Prochlorococcus</taxon>
    </lineage>
</organism>
<dbReference type="EC" id="6.1.1.7" evidence="1"/>
<dbReference type="EMBL" id="BX548174">
    <property type="protein sequence ID" value="CAE18503.1"/>
    <property type="molecule type" value="Genomic_DNA"/>
</dbReference>
<dbReference type="RefSeq" id="WP_011131682.1">
    <property type="nucleotide sequence ID" value="NC_005072.1"/>
</dbReference>
<dbReference type="SMR" id="Q7V3N0"/>
<dbReference type="STRING" id="59919.PMM0044"/>
<dbReference type="KEGG" id="pmm:PMM0044"/>
<dbReference type="eggNOG" id="COG0013">
    <property type="taxonomic scope" value="Bacteria"/>
</dbReference>
<dbReference type="HOGENOM" id="CLU_004485_1_1_3"/>
<dbReference type="OrthoDB" id="9803884at2"/>
<dbReference type="Proteomes" id="UP000001026">
    <property type="component" value="Chromosome"/>
</dbReference>
<dbReference type="GO" id="GO:0005829">
    <property type="term" value="C:cytosol"/>
    <property type="evidence" value="ECO:0007669"/>
    <property type="project" value="TreeGrafter"/>
</dbReference>
<dbReference type="GO" id="GO:0004813">
    <property type="term" value="F:alanine-tRNA ligase activity"/>
    <property type="evidence" value="ECO:0007669"/>
    <property type="project" value="UniProtKB-UniRule"/>
</dbReference>
<dbReference type="GO" id="GO:0002161">
    <property type="term" value="F:aminoacyl-tRNA deacylase activity"/>
    <property type="evidence" value="ECO:0007669"/>
    <property type="project" value="TreeGrafter"/>
</dbReference>
<dbReference type="GO" id="GO:0005524">
    <property type="term" value="F:ATP binding"/>
    <property type="evidence" value="ECO:0007669"/>
    <property type="project" value="UniProtKB-UniRule"/>
</dbReference>
<dbReference type="GO" id="GO:0000049">
    <property type="term" value="F:tRNA binding"/>
    <property type="evidence" value="ECO:0007669"/>
    <property type="project" value="UniProtKB-KW"/>
</dbReference>
<dbReference type="GO" id="GO:0008270">
    <property type="term" value="F:zinc ion binding"/>
    <property type="evidence" value="ECO:0007669"/>
    <property type="project" value="UniProtKB-UniRule"/>
</dbReference>
<dbReference type="GO" id="GO:0006419">
    <property type="term" value="P:alanyl-tRNA aminoacylation"/>
    <property type="evidence" value="ECO:0007669"/>
    <property type="project" value="UniProtKB-UniRule"/>
</dbReference>
<dbReference type="CDD" id="cd00673">
    <property type="entry name" value="AlaRS_core"/>
    <property type="match status" value="1"/>
</dbReference>
<dbReference type="FunFam" id="3.10.310.40:FF:000001">
    <property type="entry name" value="Alanine--tRNA ligase"/>
    <property type="match status" value="1"/>
</dbReference>
<dbReference type="FunFam" id="3.30.54.20:FF:000001">
    <property type="entry name" value="Alanine--tRNA ligase"/>
    <property type="match status" value="1"/>
</dbReference>
<dbReference type="FunFam" id="3.30.930.10:FF:000004">
    <property type="entry name" value="Alanine--tRNA ligase"/>
    <property type="match status" value="1"/>
</dbReference>
<dbReference type="FunFam" id="3.30.980.10:FF:000004">
    <property type="entry name" value="Alanine--tRNA ligase, cytoplasmic"/>
    <property type="match status" value="1"/>
</dbReference>
<dbReference type="Gene3D" id="2.40.30.130">
    <property type="match status" value="1"/>
</dbReference>
<dbReference type="Gene3D" id="3.10.310.40">
    <property type="match status" value="1"/>
</dbReference>
<dbReference type="Gene3D" id="3.30.54.20">
    <property type="match status" value="1"/>
</dbReference>
<dbReference type="Gene3D" id="6.10.250.550">
    <property type="match status" value="1"/>
</dbReference>
<dbReference type="Gene3D" id="3.30.930.10">
    <property type="entry name" value="Bira Bifunctional Protein, Domain 2"/>
    <property type="match status" value="1"/>
</dbReference>
<dbReference type="Gene3D" id="3.30.980.10">
    <property type="entry name" value="Threonyl-trna Synthetase, Chain A, domain 2"/>
    <property type="match status" value="1"/>
</dbReference>
<dbReference type="HAMAP" id="MF_00036_B">
    <property type="entry name" value="Ala_tRNA_synth_B"/>
    <property type="match status" value="1"/>
</dbReference>
<dbReference type="InterPro" id="IPR045864">
    <property type="entry name" value="aa-tRNA-synth_II/BPL/LPL"/>
</dbReference>
<dbReference type="InterPro" id="IPR002318">
    <property type="entry name" value="Ala-tRNA-lgiase_IIc"/>
</dbReference>
<dbReference type="InterPro" id="IPR018162">
    <property type="entry name" value="Ala-tRNA-ligase_IIc_anticod-bd"/>
</dbReference>
<dbReference type="InterPro" id="IPR018165">
    <property type="entry name" value="Ala-tRNA-synth_IIc_core"/>
</dbReference>
<dbReference type="InterPro" id="IPR018164">
    <property type="entry name" value="Ala-tRNA-synth_IIc_N"/>
</dbReference>
<dbReference type="InterPro" id="IPR050058">
    <property type="entry name" value="Ala-tRNA_ligase"/>
</dbReference>
<dbReference type="InterPro" id="IPR023033">
    <property type="entry name" value="Ala_tRNA_ligase_euk/bac"/>
</dbReference>
<dbReference type="InterPro" id="IPR003156">
    <property type="entry name" value="DHHA1_dom"/>
</dbReference>
<dbReference type="InterPro" id="IPR018163">
    <property type="entry name" value="Thr/Ala-tRNA-synth_IIc_edit"/>
</dbReference>
<dbReference type="InterPro" id="IPR009000">
    <property type="entry name" value="Transl_B-barrel_sf"/>
</dbReference>
<dbReference type="InterPro" id="IPR012947">
    <property type="entry name" value="tRNA_SAD"/>
</dbReference>
<dbReference type="NCBIfam" id="TIGR00344">
    <property type="entry name" value="alaS"/>
    <property type="match status" value="1"/>
</dbReference>
<dbReference type="PANTHER" id="PTHR11777:SF9">
    <property type="entry name" value="ALANINE--TRNA LIGASE, CYTOPLASMIC"/>
    <property type="match status" value="1"/>
</dbReference>
<dbReference type="PANTHER" id="PTHR11777">
    <property type="entry name" value="ALANYL-TRNA SYNTHETASE"/>
    <property type="match status" value="1"/>
</dbReference>
<dbReference type="Pfam" id="PF02272">
    <property type="entry name" value="DHHA1"/>
    <property type="match status" value="1"/>
</dbReference>
<dbReference type="Pfam" id="PF01411">
    <property type="entry name" value="tRNA-synt_2c"/>
    <property type="match status" value="1"/>
</dbReference>
<dbReference type="Pfam" id="PF07973">
    <property type="entry name" value="tRNA_SAD"/>
    <property type="match status" value="1"/>
</dbReference>
<dbReference type="PRINTS" id="PR00980">
    <property type="entry name" value="TRNASYNTHALA"/>
</dbReference>
<dbReference type="SMART" id="SM00863">
    <property type="entry name" value="tRNA_SAD"/>
    <property type="match status" value="1"/>
</dbReference>
<dbReference type="SUPFAM" id="SSF55681">
    <property type="entry name" value="Class II aaRS and biotin synthetases"/>
    <property type="match status" value="1"/>
</dbReference>
<dbReference type="SUPFAM" id="SSF101353">
    <property type="entry name" value="Putative anticodon-binding domain of alanyl-tRNA synthetase (AlaRS)"/>
    <property type="match status" value="1"/>
</dbReference>
<dbReference type="SUPFAM" id="SSF55186">
    <property type="entry name" value="ThrRS/AlaRS common domain"/>
    <property type="match status" value="1"/>
</dbReference>
<dbReference type="SUPFAM" id="SSF50447">
    <property type="entry name" value="Translation proteins"/>
    <property type="match status" value="1"/>
</dbReference>
<dbReference type="PROSITE" id="PS50860">
    <property type="entry name" value="AA_TRNA_LIGASE_II_ALA"/>
    <property type="match status" value="1"/>
</dbReference>
<name>SYA_PROMP</name>
<proteinExistence type="inferred from homology"/>